<keyword id="KW-1185">Reference proteome</keyword>
<keyword id="KW-0687">Ribonucleoprotein</keyword>
<keyword id="KW-0689">Ribosomal protein</keyword>
<keyword id="KW-0694">RNA-binding</keyword>
<keyword id="KW-0699">rRNA-binding</keyword>
<dbReference type="EMBL" id="CP001628">
    <property type="protein sequence ID" value="ACS30780.1"/>
    <property type="molecule type" value="Genomic_DNA"/>
</dbReference>
<dbReference type="RefSeq" id="WP_010078585.1">
    <property type="nucleotide sequence ID" value="NC_012803.1"/>
</dbReference>
<dbReference type="SMR" id="C5CCG8"/>
<dbReference type="STRING" id="465515.Mlut_12750"/>
<dbReference type="EnsemblBacteria" id="ACS30780">
    <property type="protein sequence ID" value="ACS30780"/>
    <property type="gene ID" value="Mlut_12750"/>
</dbReference>
<dbReference type="GeneID" id="93345430"/>
<dbReference type="KEGG" id="mlu:Mlut_12750"/>
<dbReference type="eggNOG" id="COG0522">
    <property type="taxonomic scope" value="Bacteria"/>
</dbReference>
<dbReference type="HOGENOM" id="CLU_092403_0_3_11"/>
<dbReference type="Proteomes" id="UP000000738">
    <property type="component" value="Chromosome"/>
</dbReference>
<dbReference type="GO" id="GO:0015935">
    <property type="term" value="C:small ribosomal subunit"/>
    <property type="evidence" value="ECO:0007669"/>
    <property type="project" value="InterPro"/>
</dbReference>
<dbReference type="GO" id="GO:0019843">
    <property type="term" value="F:rRNA binding"/>
    <property type="evidence" value="ECO:0007669"/>
    <property type="project" value="UniProtKB-UniRule"/>
</dbReference>
<dbReference type="GO" id="GO:0003735">
    <property type="term" value="F:structural constituent of ribosome"/>
    <property type="evidence" value="ECO:0007669"/>
    <property type="project" value="InterPro"/>
</dbReference>
<dbReference type="GO" id="GO:0042274">
    <property type="term" value="P:ribosomal small subunit biogenesis"/>
    <property type="evidence" value="ECO:0007669"/>
    <property type="project" value="TreeGrafter"/>
</dbReference>
<dbReference type="GO" id="GO:0006412">
    <property type="term" value="P:translation"/>
    <property type="evidence" value="ECO:0007669"/>
    <property type="project" value="UniProtKB-UniRule"/>
</dbReference>
<dbReference type="CDD" id="cd00165">
    <property type="entry name" value="S4"/>
    <property type="match status" value="1"/>
</dbReference>
<dbReference type="FunFam" id="3.10.290.10:FF:000001">
    <property type="entry name" value="30S ribosomal protein S4"/>
    <property type="match status" value="1"/>
</dbReference>
<dbReference type="Gene3D" id="1.10.1050.10">
    <property type="entry name" value="Ribosomal Protein S4 Delta 41, Chain A, domain 1"/>
    <property type="match status" value="1"/>
</dbReference>
<dbReference type="Gene3D" id="3.10.290.10">
    <property type="entry name" value="RNA-binding S4 domain"/>
    <property type="match status" value="1"/>
</dbReference>
<dbReference type="HAMAP" id="MF_01306_B">
    <property type="entry name" value="Ribosomal_uS4_B"/>
    <property type="match status" value="1"/>
</dbReference>
<dbReference type="InterPro" id="IPR022801">
    <property type="entry name" value="Ribosomal_uS4"/>
</dbReference>
<dbReference type="InterPro" id="IPR005709">
    <property type="entry name" value="Ribosomal_uS4_bac-type"/>
</dbReference>
<dbReference type="InterPro" id="IPR018079">
    <property type="entry name" value="Ribosomal_uS4_CS"/>
</dbReference>
<dbReference type="InterPro" id="IPR001912">
    <property type="entry name" value="Ribosomal_uS4_N"/>
</dbReference>
<dbReference type="InterPro" id="IPR002942">
    <property type="entry name" value="S4_RNA-bd"/>
</dbReference>
<dbReference type="InterPro" id="IPR036986">
    <property type="entry name" value="S4_RNA-bd_sf"/>
</dbReference>
<dbReference type="NCBIfam" id="NF003717">
    <property type="entry name" value="PRK05327.1"/>
    <property type="match status" value="1"/>
</dbReference>
<dbReference type="NCBIfam" id="TIGR01017">
    <property type="entry name" value="rpsD_bact"/>
    <property type="match status" value="1"/>
</dbReference>
<dbReference type="PANTHER" id="PTHR11831">
    <property type="entry name" value="30S 40S RIBOSOMAL PROTEIN"/>
    <property type="match status" value="1"/>
</dbReference>
<dbReference type="PANTHER" id="PTHR11831:SF4">
    <property type="entry name" value="SMALL RIBOSOMAL SUBUNIT PROTEIN US4M"/>
    <property type="match status" value="1"/>
</dbReference>
<dbReference type="Pfam" id="PF00163">
    <property type="entry name" value="Ribosomal_S4"/>
    <property type="match status" value="1"/>
</dbReference>
<dbReference type="Pfam" id="PF01479">
    <property type="entry name" value="S4"/>
    <property type="match status" value="1"/>
</dbReference>
<dbReference type="SMART" id="SM01390">
    <property type="entry name" value="Ribosomal_S4"/>
    <property type="match status" value="1"/>
</dbReference>
<dbReference type="SMART" id="SM00363">
    <property type="entry name" value="S4"/>
    <property type="match status" value="1"/>
</dbReference>
<dbReference type="SUPFAM" id="SSF55174">
    <property type="entry name" value="Alpha-L RNA-binding motif"/>
    <property type="match status" value="1"/>
</dbReference>
<dbReference type="PROSITE" id="PS00632">
    <property type="entry name" value="RIBOSOMAL_S4"/>
    <property type="match status" value="1"/>
</dbReference>
<dbReference type="PROSITE" id="PS50889">
    <property type="entry name" value="S4"/>
    <property type="match status" value="1"/>
</dbReference>
<feature type="chain" id="PRO_1000214296" description="Small ribosomal subunit protein uS4">
    <location>
        <begin position="1"/>
        <end position="208"/>
    </location>
</feature>
<feature type="domain" description="S4 RNA-binding" evidence="1">
    <location>
        <begin position="95"/>
        <end position="155"/>
    </location>
</feature>
<feature type="region of interest" description="Disordered" evidence="2">
    <location>
        <begin position="29"/>
        <end position="48"/>
    </location>
</feature>
<name>RS4_MICLC</name>
<gene>
    <name evidence="1" type="primary">rpsD</name>
    <name type="ordered locus">Mlut_12750</name>
</gene>
<protein>
    <recommendedName>
        <fullName evidence="1">Small ribosomal subunit protein uS4</fullName>
    </recommendedName>
    <alternativeName>
        <fullName evidence="3">30S ribosomal protein S4</fullName>
    </alternativeName>
</protein>
<organism>
    <name type="scientific">Micrococcus luteus (strain ATCC 4698 / DSM 20030 / JCM 1464 / CCM 169 / CCUG 5858 / IAM 1056 / NBRC 3333 / NCIMB 9278 / NCTC 2665 / VKM Ac-2230)</name>
    <name type="common">Micrococcus lysodeikticus</name>
    <dbReference type="NCBI Taxonomy" id="465515"/>
    <lineage>
        <taxon>Bacteria</taxon>
        <taxon>Bacillati</taxon>
        <taxon>Actinomycetota</taxon>
        <taxon>Actinomycetes</taxon>
        <taxon>Micrococcales</taxon>
        <taxon>Micrococcaceae</taxon>
        <taxon>Micrococcus</taxon>
    </lineage>
</organism>
<proteinExistence type="inferred from homology"/>
<evidence type="ECO:0000255" key="1">
    <source>
        <dbReference type="HAMAP-Rule" id="MF_01306"/>
    </source>
</evidence>
<evidence type="ECO:0000256" key="2">
    <source>
        <dbReference type="SAM" id="MobiDB-lite"/>
    </source>
</evidence>
<evidence type="ECO:0000305" key="3"/>
<comment type="function">
    <text evidence="1">One of the primary rRNA binding proteins, it binds directly to 16S rRNA where it nucleates assembly of the body of the 30S subunit.</text>
</comment>
<comment type="function">
    <text evidence="1">With S5 and S12 plays an important role in translational accuracy.</text>
</comment>
<comment type="subunit">
    <text evidence="1">Part of the 30S ribosomal subunit. Contacts protein S5. The interaction surface between S4 and S5 is involved in control of translational fidelity.</text>
</comment>
<comment type="similarity">
    <text evidence="1">Belongs to the universal ribosomal protein uS4 family.</text>
</comment>
<reference key="1">
    <citation type="journal article" date="2010" name="J. Bacteriol.">
        <title>Genome sequence of the Fleming strain of Micrococcus luteus, a simple free-living actinobacterium.</title>
        <authorList>
            <person name="Young M."/>
            <person name="Artsatbanov V."/>
            <person name="Beller H.R."/>
            <person name="Chandra G."/>
            <person name="Chater K.F."/>
            <person name="Dover L.G."/>
            <person name="Goh E.B."/>
            <person name="Kahan T."/>
            <person name="Kaprelyants A.S."/>
            <person name="Kyrpides N."/>
            <person name="Lapidus A."/>
            <person name="Lowry S.R."/>
            <person name="Lykidis A."/>
            <person name="Mahillon J."/>
            <person name="Markowitz V."/>
            <person name="Mavromatis K."/>
            <person name="Mukamolova G.V."/>
            <person name="Oren A."/>
            <person name="Rokem J.S."/>
            <person name="Smith M.C."/>
            <person name="Young D.I."/>
            <person name="Greenblatt C.L."/>
        </authorList>
    </citation>
    <scope>NUCLEOTIDE SEQUENCE [LARGE SCALE GENOMIC DNA]</scope>
    <source>
        <strain>ATCC 4698 / DSM 20030 / JCM 1464 / CCM 169 / CCUG 5858 / IAM 1056 / NBRC 3333 / NCIMB 9278 / NCTC 2665 / VKM Ac-2230</strain>
    </source>
</reference>
<accession>C5CCG8</accession>
<sequence>MSGNLRTRRTVRHSRALGIALTPKAEKYMERRPYGPGQHGRARRKQDSDYAVRLKEKQRLRAQYNIREAQMRRYFEEAKRTAGLTGENLVELLEQRLDALVLRAGFARTIQQARQLVVHRHIMVDGKRVDVPSFRVKEGQMIHVHERSEKMVPFQLAAAGAHQQVLPATPGYLTVEIEKLRATLTRRPKRSEVPVTCEEQLVVEYYAR</sequence>